<gene>
    <name evidence="1" type="primary">rraB</name>
    <name type="ordered locus">PBPRA0479</name>
</gene>
<proteinExistence type="inferred from homology"/>
<comment type="function">
    <text evidence="1">Globally modulates RNA abundance by binding to RNase E (Rne) and regulating its endonucleolytic activity. Can modulate Rne action in a substrate-dependent manner by altering the composition of the degradosome.</text>
</comment>
<comment type="subunit">
    <text evidence="1">Interacts with the C-terminal region of Rne.</text>
</comment>
<comment type="subcellular location">
    <subcellularLocation>
        <location evidence="1">Cytoplasm</location>
    </subcellularLocation>
</comment>
<comment type="similarity">
    <text evidence="1">Belongs to the RraB family.</text>
</comment>
<reference key="1">
    <citation type="journal article" date="2005" name="Science">
        <title>Life at depth: Photobacterium profundum genome sequence and expression analysis.</title>
        <authorList>
            <person name="Vezzi A."/>
            <person name="Campanaro S."/>
            <person name="D'Angelo M."/>
            <person name="Simonato F."/>
            <person name="Vitulo N."/>
            <person name="Lauro F.M."/>
            <person name="Cestaro A."/>
            <person name="Malacrida G."/>
            <person name="Simionati B."/>
            <person name="Cannata N."/>
            <person name="Romualdi C."/>
            <person name="Bartlett D.H."/>
            <person name="Valle G."/>
        </authorList>
    </citation>
    <scope>NUCLEOTIDE SEQUENCE [LARGE SCALE GENOMIC DNA]</scope>
    <source>
        <strain>ATCC BAA-1253 / SS9</strain>
    </source>
</reference>
<organism>
    <name type="scientific">Photobacterium profundum (strain SS9)</name>
    <dbReference type="NCBI Taxonomy" id="298386"/>
    <lineage>
        <taxon>Bacteria</taxon>
        <taxon>Pseudomonadati</taxon>
        <taxon>Pseudomonadota</taxon>
        <taxon>Gammaproteobacteria</taxon>
        <taxon>Vibrionales</taxon>
        <taxon>Vibrionaceae</taxon>
        <taxon>Photobacterium</taxon>
    </lineage>
</organism>
<sequence length="135" mass="15058">MSYAELIEEQKEETRDIIAALLEDGSEPEALYTIEHHFSADTFAELEAAAVEAFKMGFEVLEAEELELAPEDGGGKVVCFDAVMESALNAELIDEQTEKLIALADKHDIDYDGWGTYFESDEDDEEDESEDKPEA</sequence>
<name>RRAB_PHOPR</name>
<keyword id="KW-0963">Cytoplasm</keyword>
<keyword id="KW-1185">Reference proteome</keyword>
<feature type="chain" id="PRO_0000404310" description="Regulator of ribonuclease activity B">
    <location>
        <begin position="1"/>
        <end position="135"/>
    </location>
</feature>
<feature type="region of interest" description="Disordered" evidence="2">
    <location>
        <begin position="114"/>
        <end position="135"/>
    </location>
</feature>
<feature type="compositionally biased region" description="Acidic residues" evidence="2">
    <location>
        <begin position="119"/>
        <end position="135"/>
    </location>
</feature>
<protein>
    <recommendedName>
        <fullName evidence="1">Regulator of ribonuclease activity B</fullName>
    </recommendedName>
</protein>
<dbReference type="EMBL" id="CR378664">
    <property type="protein sequence ID" value="CAG18910.1"/>
    <property type="molecule type" value="Genomic_DNA"/>
</dbReference>
<dbReference type="RefSeq" id="WP_011217266.1">
    <property type="nucleotide sequence ID" value="NC_006370.1"/>
</dbReference>
<dbReference type="SMR" id="Q6LUW5"/>
<dbReference type="STRING" id="298386.PBPRA0479"/>
<dbReference type="KEGG" id="ppr:PBPRA0479"/>
<dbReference type="eggNOG" id="COG3076">
    <property type="taxonomic scope" value="Bacteria"/>
</dbReference>
<dbReference type="HOGENOM" id="CLU_128640_0_0_6"/>
<dbReference type="Proteomes" id="UP000000593">
    <property type="component" value="Chromosome 1"/>
</dbReference>
<dbReference type="GO" id="GO:0005737">
    <property type="term" value="C:cytoplasm"/>
    <property type="evidence" value="ECO:0007669"/>
    <property type="project" value="UniProtKB-SubCell"/>
</dbReference>
<dbReference type="GO" id="GO:0060698">
    <property type="term" value="F:endoribonuclease inhibitor activity"/>
    <property type="evidence" value="ECO:0007669"/>
    <property type="project" value="UniProtKB-UniRule"/>
</dbReference>
<dbReference type="GO" id="GO:0019899">
    <property type="term" value="F:enzyme binding"/>
    <property type="evidence" value="ECO:0007669"/>
    <property type="project" value="UniProtKB-UniRule"/>
</dbReference>
<dbReference type="Gene3D" id="3.30.70.970">
    <property type="entry name" value="RraB-like"/>
    <property type="match status" value="1"/>
</dbReference>
<dbReference type="HAMAP" id="MF_01888">
    <property type="entry name" value="RraB"/>
    <property type="match status" value="1"/>
</dbReference>
<dbReference type="InterPro" id="IPR016716">
    <property type="entry name" value="RraB"/>
</dbReference>
<dbReference type="InterPro" id="IPR036701">
    <property type="entry name" value="RraB-like_sf"/>
</dbReference>
<dbReference type="InterPro" id="IPR009671">
    <property type="entry name" value="RraB_dom"/>
</dbReference>
<dbReference type="NCBIfam" id="NF008393">
    <property type="entry name" value="PRK11191.1"/>
    <property type="match status" value="1"/>
</dbReference>
<dbReference type="Pfam" id="PF06877">
    <property type="entry name" value="RraB"/>
    <property type="match status" value="1"/>
</dbReference>
<dbReference type="PIRSF" id="PIRSF018193">
    <property type="entry name" value="UCP018193"/>
    <property type="match status" value="1"/>
</dbReference>
<dbReference type="SUPFAM" id="SSF89946">
    <property type="entry name" value="Hypothetical protein VC0424"/>
    <property type="match status" value="1"/>
</dbReference>
<accession>Q6LUW5</accession>
<evidence type="ECO:0000255" key="1">
    <source>
        <dbReference type="HAMAP-Rule" id="MF_01888"/>
    </source>
</evidence>
<evidence type="ECO:0000256" key="2">
    <source>
        <dbReference type="SAM" id="MobiDB-lite"/>
    </source>
</evidence>